<organism>
    <name type="scientific">Drosophila erecta</name>
    <name type="common">Fruit fly</name>
    <dbReference type="NCBI Taxonomy" id="7220"/>
    <lineage>
        <taxon>Eukaryota</taxon>
        <taxon>Metazoa</taxon>
        <taxon>Ecdysozoa</taxon>
        <taxon>Arthropoda</taxon>
        <taxon>Hexapoda</taxon>
        <taxon>Insecta</taxon>
        <taxon>Pterygota</taxon>
        <taxon>Neoptera</taxon>
        <taxon>Endopterygota</taxon>
        <taxon>Diptera</taxon>
        <taxon>Brachycera</taxon>
        <taxon>Muscomorpha</taxon>
        <taxon>Ephydroidea</taxon>
        <taxon>Drosophilidae</taxon>
        <taxon>Drosophila</taxon>
        <taxon>Sophophora</taxon>
    </lineage>
</organism>
<keyword id="KW-1015">Disulfide bond</keyword>
<keyword id="KW-0378">Hydrolase</keyword>
<keyword id="KW-0645">Protease</keyword>
<keyword id="KW-0964">Secreted</keyword>
<keyword id="KW-0720">Serine protease</keyword>
<keyword id="KW-0732">Signal</keyword>
<keyword id="KW-0865">Zymogen</keyword>
<accession>P54628</accession>
<sequence>MHGLVVLLVCLAVGSAFAGTIGVSNADPFEREGRIVGGEDTTIRAHPYQVSLQNKKGSHFCGGSLINEDTVVTAAHCLVGKKIAKVFVRLGSTLYNEGGIVVAVRALTYNADYSSKTMENDVGILKLAEKVKETDDIRYIELATETPPTGTTAVVTGWGSKCYFWCMTLPKTLQAVYVNIVDWKTCASDEYKYGEVIYDTMVCAYEKKKDACQGDSGGPLAIGNTLVGIVSWGYACASNLLPGVYSDVPALRKWILNASQTL</sequence>
<protein>
    <recommendedName>
        <fullName>Trypsin theta</fullName>
        <ecNumber>3.4.21.4</ecNumber>
    </recommendedName>
</protein>
<dbReference type="EC" id="3.4.21.4"/>
<dbReference type="EMBL" id="U40653">
    <property type="protein sequence ID" value="AAA83238.1"/>
    <property type="molecule type" value="Genomic_DNA"/>
</dbReference>
<dbReference type="SMR" id="P54628"/>
<dbReference type="MEROPS" id="S01.114"/>
<dbReference type="eggNOG" id="KOG3627">
    <property type="taxonomic scope" value="Eukaryota"/>
</dbReference>
<dbReference type="OrthoDB" id="10059102at2759"/>
<dbReference type="GO" id="GO:0005576">
    <property type="term" value="C:extracellular region"/>
    <property type="evidence" value="ECO:0007669"/>
    <property type="project" value="UniProtKB-SubCell"/>
</dbReference>
<dbReference type="GO" id="GO:0004252">
    <property type="term" value="F:serine-type endopeptidase activity"/>
    <property type="evidence" value="ECO:0007669"/>
    <property type="project" value="UniProtKB-EC"/>
</dbReference>
<dbReference type="GO" id="GO:0006508">
    <property type="term" value="P:proteolysis"/>
    <property type="evidence" value="ECO:0007669"/>
    <property type="project" value="UniProtKB-KW"/>
</dbReference>
<dbReference type="CDD" id="cd00190">
    <property type="entry name" value="Tryp_SPc"/>
    <property type="match status" value="1"/>
</dbReference>
<dbReference type="FunFam" id="2.40.10.10:FF:000077">
    <property type="entry name" value="Predicted protein"/>
    <property type="match status" value="1"/>
</dbReference>
<dbReference type="Gene3D" id="2.40.10.10">
    <property type="entry name" value="Trypsin-like serine proteases"/>
    <property type="match status" value="1"/>
</dbReference>
<dbReference type="InterPro" id="IPR050430">
    <property type="entry name" value="Peptidase_S1"/>
</dbReference>
<dbReference type="InterPro" id="IPR009003">
    <property type="entry name" value="Peptidase_S1_PA"/>
</dbReference>
<dbReference type="InterPro" id="IPR043504">
    <property type="entry name" value="Peptidase_S1_PA_chymotrypsin"/>
</dbReference>
<dbReference type="InterPro" id="IPR001314">
    <property type="entry name" value="Peptidase_S1A"/>
</dbReference>
<dbReference type="InterPro" id="IPR001254">
    <property type="entry name" value="Trypsin_dom"/>
</dbReference>
<dbReference type="InterPro" id="IPR018114">
    <property type="entry name" value="TRYPSIN_HIS"/>
</dbReference>
<dbReference type="InterPro" id="IPR033116">
    <property type="entry name" value="TRYPSIN_SER"/>
</dbReference>
<dbReference type="PANTHER" id="PTHR24276:SF94">
    <property type="entry name" value="AT20289P-RELATED"/>
    <property type="match status" value="1"/>
</dbReference>
<dbReference type="PANTHER" id="PTHR24276">
    <property type="entry name" value="POLYSERASE-RELATED"/>
    <property type="match status" value="1"/>
</dbReference>
<dbReference type="Pfam" id="PF00089">
    <property type="entry name" value="Trypsin"/>
    <property type="match status" value="1"/>
</dbReference>
<dbReference type="PRINTS" id="PR00722">
    <property type="entry name" value="CHYMOTRYPSIN"/>
</dbReference>
<dbReference type="SMART" id="SM00020">
    <property type="entry name" value="Tryp_SPc"/>
    <property type="match status" value="1"/>
</dbReference>
<dbReference type="SUPFAM" id="SSF50494">
    <property type="entry name" value="Trypsin-like serine proteases"/>
    <property type="match status" value="1"/>
</dbReference>
<dbReference type="PROSITE" id="PS50240">
    <property type="entry name" value="TRYPSIN_DOM"/>
    <property type="match status" value="1"/>
</dbReference>
<dbReference type="PROSITE" id="PS00134">
    <property type="entry name" value="TRYPSIN_HIS"/>
    <property type="match status" value="1"/>
</dbReference>
<dbReference type="PROSITE" id="PS00135">
    <property type="entry name" value="TRYPSIN_SER"/>
    <property type="match status" value="1"/>
</dbReference>
<reference key="1">
    <citation type="journal article" date="1999" name="Mol. Biol. Evol.">
        <title>Concerted evolution within a trypsin gene cluster in Drosophila.</title>
        <authorList>
            <person name="Wang S."/>
            <person name="Magoulas C."/>
            <person name="Hickey D.A."/>
        </authorList>
    </citation>
    <scope>NUCLEOTIDE SEQUENCE [GENOMIC DNA]</scope>
</reference>
<name>TRYT_DROER</name>
<gene>
    <name type="primary">thetaTry</name>
</gene>
<comment type="catalytic activity">
    <reaction>
        <text>Preferential cleavage: Arg-|-Xaa, Lys-|-Xaa.</text>
        <dbReference type="EC" id="3.4.21.4"/>
    </reaction>
</comment>
<comment type="subcellular location">
    <subcellularLocation>
        <location>Secreted</location>
        <location>Extracellular space</location>
    </subcellularLocation>
</comment>
<comment type="similarity">
    <text evidence="2">Belongs to the peptidase S1 family.</text>
</comment>
<proteinExistence type="inferred from homology"/>
<feature type="signal peptide" evidence="3">
    <location>
        <begin position="1"/>
        <end position="19"/>
    </location>
</feature>
<feature type="propeptide" id="PRO_0000028277" description="Activation peptide">
    <location>
        <begin position="20"/>
        <end position="34"/>
    </location>
</feature>
<feature type="chain" id="PRO_0000028278" description="Trypsin theta">
    <location>
        <begin position="35"/>
        <end position="262"/>
    </location>
</feature>
<feature type="domain" description="Peptidase S1" evidence="2">
    <location>
        <begin position="35"/>
        <end position="260"/>
    </location>
</feature>
<feature type="active site" description="Charge relay system" evidence="1">
    <location>
        <position position="76"/>
    </location>
</feature>
<feature type="active site" description="Charge relay system" evidence="1">
    <location>
        <position position="121"/>
    </location>
</feature>
<feature type="active site" description="Charge relay system" evidence="1">
    <location>
        <position position="216"/>
    </location>
</feature>
<feature type="site" description="Required for specificity" evidence="1">
    <location>
        <position position="210"/>
    </location>
</feature>
<feature type="disulfide bond" evidence="2">
    <location>
        <begin position="61"/>
        <end position="77"/>
    </location>
</feature>
<feature type="disulfide bond" evidence="2">
    <location>
        <begin position="186"/>
        <end position="203"/>
    </location>
</feature>
<feature type="disulfide bond" evidence="2">
    <location>
        <begin position="212"/>
        <end position="236"/>
    </location>
</feature>
<evidence type="ECO:0000250" key="1"/>
<evidence type="ECO:0000255" key="2">
    <source>
        <dbReference type="PROSITE-ProRule" id="PRU00274"/>
    </source>
</evidence>
<evidence type="ECO:0000305" key="3"/>